<dbReference type="EC" id="3.1.26.-" evidence="1"/>
<dbReference type="EMBL" id="CP000896">
    <property type="protein sequence ID" value="ABX80770.1"/>
    <property type="molecule type" value="Genomic_DNA"/>
</dbReference>
<dbReference type="RefSeq" id="WP_012242101.1">
    <property type="nucleotide sequence ID" value="NC_010163.1"/>
</dbReference>
<dbReference type="SMR" id="A9NEJ0"/>
<dbReference type="STRING" id="441768.ACL_0144"/>
<dbReference type="GeneID" id="41338342"/>
<dbReference type="KEGG" id="acl:ACL_0144"/>
<dbReference type="eggNOG" id="COG1939">
    <property type="taxonomic scope" value="Bacteria"/>
</dbReference>
<dbReference type="HOGENOM" id="CLU_091169_2_0_14"/>
<dbReference type="OrthoDB" id="46571at2"/>
<dbReference type="Proteomes" id="UP000008558">
    <property type="component" value="Chromosome"/>
</dbReference>
<dbReference type="GO" id="GO:0005737">
    <property type="term" value="C:cytoplasm"/>
    <property type="evidence" value="ECO:0007669"/>
    <property type="project" value="UniProtKB-SubCell"/>
</dbReference>
<dbReference type="GO" id="GO:0004525">
    <property type="term" value="F:ribonuclease III activity"/>
    <property type="evidence" value="ECO:0007669"/>
    <property type="project" value="InterPro"/>
</dbReference>
<dbReference type="GO" id="GO:0019843">
    <property type="term" value="F:rRNA binding"/>
    <property type="evidence" value="ECO:0007669"/>
    <property type="project" value="UniProtKB-UniRule"/>
</dbReference>
<dbReference type="GO" id="GO:0006364">
    <property type="term" value="P:rRNA processing"/>
    <property type="evidence" value="ECO:0007669"/>
    <property type="project" value="UniProtKB-UniRule"/>
</dbReference>
<dbReference type="Gene3D" id="1.10.1520.10">
    <property type="entry name" value="Ribonuclease III domain"/>
    <property type="match status" value="1"/>
</dbReference>
<dbReference type="HAMAP" id="MF_01468">
    <property type="entry name" value="RNase_Mini_III"/>
    <property type="match status" value="1"/>
</dbReference>
<dbReference type="InterPro" id="IPR008226">
    <property type="entry name" value="Mini3_fam"/>
</dbReference>
<dbReference type="InterPro" id="IPR000999">
    <property type="entry name" value="RNase_III_dom"/>
</dbReference>
<dbReference type="InterPro" id="IPR036389">
    <property type="entry name" value="RNase_III_sf"/>
</dbReference>
<dbReference type="PANTHER" id="PTHR34276">
    <property type="entry name" value="MINI-RIBONUCLEASE 3"/>
    <property type="match status" value="1"/>
</dbReference>
<dbReference type="PANTHER" id="PTHR34276:SF1">
    <property type="entry name" value="MINI-RIBONUCLEASE 3"/>
    <property type="match status" value="1"/>
</dbReference>
<dbReference type="Pfam" id="PF00636">
    <property type="entry name" value="Ribonuclease_3"/>
    <property type="match status" value="1"/>
</dbReference>
<dbReference type="PIRSF" id="PIRSF005520">
    <property type="entry name" value="UCP005520"/>
    <property type="match status" value="1"/>
</dbReference>
<dbReference type="SUPFAM" id="SSF69065">
    <property type="entry name" value="RNase III domain-like"/>
    <property type="match status" value="1"/>
</dbReference>
<feature type="chain" id="PRO_0000415979" description="Mini-ribonuclease 3">
    <location>
        <begin position="1"/>
        <end position="125"/>
    </location>
</feature>
<feature type="active site" evidence="1">
    <location>
        <position position="11"/>
    </location>
</feature>
<proteinExistence type="inferred from homology"/>
<evidence type="ECO:0000255" key="1">
    <source>
        <dbReference type="HAMAP-Rule" id="MF_01468"/>
    </source>
</evidence>
<sequence length="125" mass="14203">MNGLALAYLGDAYYELEIRKYLITQGIRNVGKLHTEKVRLASNEAQASIMNYFLSLEILSEEEIDAYKKGRNKSHNSRKQMDMVTYQQATGFESLIGYLSIIDEQRAKDLINLGITFIKQGGYNG</sequence>
<name>MRNC_ACHLI</name>
<organism>
    <name type="scientific">Acholeplasma laidlawii (strain PG-8A)</name>
    <dbReference type="NCBI Taxonomy" id="441768"/>
    <lineage>
        <taxon>Bacteria</taxon>
        <taxon>Bacillati</taxon>
        <taxon>Mycoplasmatota</taxon>
        <taxon>Mollicutes</taxon>
        <taxon>Acholeplasmatales</taxon>
        <taxon>Acholeplasmataceae</taxon>
        <taxon>Acholeplasma</taxon>
    </lineage>
</organism>
<gene>
    <name evidence="1" type="primary">mrnC</name>
    <name type="ordered locus">ACL_0144</name>
</gene>
<comment type="function">
    <text evidence="1">Involved in correct processing of both the 5' and 3' ends of 23S rRNA precursor. Processes 30S rRNA precursor transcript even in absence of ribonuclease 3 (Rnc); Rnc processes 30S rRNA into smaller rRNA precursors.</text>
</comment>
<comment type="cofactor">
    <cofactor evidence="1">
        <name>Mg(2+)</name>
        <dbReference type="ChEBI" id="CHEBI:18420"/>
    </cofactor>
</comment>
<comment type="subunit">
    <text evidence="1">Homodimer.</text>
</comment>
<comment type="subcellular location">
    <subcellularLocation>
        <location evidence="1">Cytoplasm</location>
    </subcellularLocation>
</comment>
<comment type="similarity">
    <text evidence="1">Belongs to the MrnC RNase family.</text>
</comment>
<reference key="1">
    <citation type="journal article" date="2011" name="J. Bacteriol.">
        <title>Complete genome and proteome of Acholeplasma laidlawii.</title>
        <authorList>
            <person name="Lazarev V.N."/>
            <person name="Levitskii S.A."/>
            <person name="Basovskii Y.I."/>
            <person name="Chukin M.M."/>
            <person name="Akopian T.A."/>
            <person name="Vereshchagin V.V."/>
            <person name="Kostrjukova E.S."/>
            <person name="Kovaleva G.Y."/>
            <person name="Kazanov M.D."/>
            <person name="Malko D.B."/>
            <person name="Vitreschak A.G."/>
            <person name="Sernova N.V."/>
            <person name="Gelfand M.S."/>
            <person name="Demina I.A."/>
            <person name="Serebryakova M.V."/>
            <person name="Galyamina M.A."/>
            <person name="Vtyurin N.N."/>
            <person name="Rogov S.I."/>
            <person name="Alexeev D.G."/>
            <person name="Ladygina V.G."/>
            <person name="Govorun V.M."/>
        </authorList>
    </citation>
    <scope>NUCLEOTIDE SEQUENCE [LARGE SCALE GENOMIC DNA]</scope>
    <source>
        <strain>PG-8A</strain>
    </source>
</reference>
<keyword id="KW-0963">Cytoplasm</keyword>
<keyword id="KW-0255">Endonuclease</keyword>
<keyword id="KW-0378">Hydrolase</keyword>
<keyword id="KW-0460">Magnesium</keyword>
<keyword id="KW-0540">Nuclease</keyword>
<keyword id="KW-1185">Reference proteome</keyword>
<keyword id="KW-0690">Ribosome biogenesis</keyword>
<keyword id="KW-0694">RNA-binding</keyword>
<keyword id="KW-0698">rRNA processing</keyword>
<keyword id="KW-0699">rRNA-binding</keyword>
<protein>
    <recommendedName>
        <fullName evidence="1">Mini-ribonuclease 3</fullName>
        <shortName evidence="1">Mini-3</shortName>
        <shortName evidence="1">Mini-RNase 3</shortName>
        <ecNumber evidence="1">3.1.26.-</ecNumber>
    </recommendedName>
    <alternativeName>
        <fullName evidence="1">Mini-RNase III</fullName>
        <shortName evidence="1">Mini-III</shortName>
    </alternativeName>
</protein>
<accession>A9NEJ0</accession>